<keyword id="KW-0966">Cell projection</keyword>
<keyword id="KW-0969">Cilium</keyword>
<keyword id="KW-0282">Flagellum</keyword>
<keyword id="KW-1185">Reference proteome</keyword>
<keyword id="KW-0832">Ubl conjugation</keyword>
<feature type="chain" id="PRO_0000307397" description="Ropporin-1-like protein">
    <location>
        <begin position="1"/>
        <end position="218"/>
    </location>
</feature>
<feature type="domain" description="RIIa">
    <location>
        <begin position="17"/>
        <end position="46"/>
    </location>
</feature>
<proteinExistence type="evidence at transcript level"/>
<comment type="function">
    <text evidence="2">Functions as part of axonemal radial spoke complexes that play an important part in the motility of sperm and cilia. Important for male fertility. With ROPN1, involved in fibrous sheath integrity and sperm motility, plays a role in PKA-dependent signaling processes required for spermatozoa capacitation.</text>
</comment>
<comment type="subunit">
    <text evidence="1 2">Component of the axonemal radial spoke complex 1 (RS1), at least composed of spoke head proteins RSPH1, RSPH3, RSPH9 and the cilia-specific component RSPH4A or sperm-specific component RSPH6A, spoke stalk proteins RSPH14, DNAJB13, DYDC1, ROPN1L and NME5, and the anchor protein IQUB (By similarity). May interact with AKAP3 (By similarity). Interacts with FSCB; the interaction increases upon spermatozoa capacitation conditions (By similarity). Interacts with CFAP61 (By similarity).</text>
</comment>
<comment type="subcellular location">
    <subcellularLocation>
        <location evidence="2">Cell projection</location>
        <location evidence="2">Cilium</location>
        <location evidence="2">Flagellum</location>
    </subcellularLocation>
    <subcellularLocation>
        <location evidence="1">Cell projection</location>
        <location evidence="1">Cilium</location>
    </subcellularLocation>
</comment>
<comment type="PTM">
    <text evidence="2">Sumoylated, sumoylation decreases upon spermatozoa capacitation conditions.</text>
</comment>
<comment type="similarity">
    <text evidence="3">Belongs to the ropporin family.</text>
</comment>
<dbReference type="EMBL" id="BC102601">
    <property type="protein sequence ID" value="AAI02602.1"/>
    <property type="molecule type" value="mRNA"/>
</dbReference>
<dbReference type="RefSeq" id="NP_001069185.1">
    <property type="nucleotide sequence ID" value="NM_001075717.2"/>
</dbReference>
<dbReference type="EMDB" id="EMD-50664"/>
<dbReference type="SMR" id="Q3T024"/>
<dbReference type="FunCoup" id="Q3T024">
    <property type="interactions" value="80"/>
</dbReference>
<dbReference type="IntAct" id="Q3T024">
    <property type="interactions" value="1"/>
</dbReference>
<dbReference type="MINT" id="Q3T024"/>
<dbReference type="STRING" id="9913.ENSBTAP00000069146"/>
<dbReference type="PaxDb" id="9913-ENSBTAP00000036517"/>
<dbReference type="GeneID" id="515565"/>
<dbReference type="KEGG" id="bta:515565"/>
<dbReference type="CTD" id="83853"/>
<dbReference type="eggNOG" id="ENOG502QTNR">
    <property type="taxonomic scope" value="Eukaryota"/>
</dbReference>
<dbReference type="InParanoid" id="Q3T024"/>
<dbReference type="OrthoDB" id="10067602at2759"/>
<dbReference type="Proteomes" id="UP000009136">
    <property type="component" value="Unplaced"/>
</dbReference>
<dbReference type="GO" id="GO:0031514">
    <property type="term" value="C:motile cilium"/>
    <property type="evidence" value="ECO:0007669"/>
    <property type="project" value="UniProtKB-SubCell"/>
</dbReference>
<dbReference type="GO" id="GO:0001534">
    <property type="term" value="C:radial spoke"/>
    <property type="evidence" value="ECO:0000250"/>
    <property type="project" value="UniProtKB"/>
</dbReference>
<dbReference type="GO" id="GO:0030317">
    <property type="term" value="P:flagellated sperm motility"/>
    <property type="evidence" value="ECO:0000250"/>
    <property type="project" value="UniProtKB"/>
</dbReference>
<dbReference type="GO" id="GO:0001932">
    <property type="term" value="P:regulation of protein phosphorylation"/>
    <property type="evidence" value="ECO:0000250"/>
    <property type="project" value="UniProtKB"/>
</dbReference>
<dbReference type="GO" id="GO:0048240">
    <property type="term" value="P:sperm capacitation"/>
    <property type="evidence" value="ECO:0000250"/>
    <property type="project" value="UniProtKB"/>
</dbReference>
<dbReference type="CDD" id="cd23019">
    <property type="entry name" value="DD_ROP"/>
    <property type="match status" value="1"/>
</dbReference>
<dbReference type="FunFam" id="1.20.890.10:FF:000004">
    <property type="entry name" value="ropporin-1-like protein isoform X2"/>
    <property type="match status" value="1"/>
</dbReference>
<dbReference type="Gene3D" id="1.20.890.10">
    <property type="entry name" value="cAMP-dependent protein kinase regulatory subunit, dimerization-anchoring domain"/>
    <property type="match status" value="1"/>
</dbReference>
<dbReference type="InterPro" id="IPR047844">
    <property type="entry name" value="ROP_DD"/>
</dbReference>
<dbReference type="PANTHER" id="PTHR14952">
    <property type="entry name" value="ROPPORIN-1-LIKE PROTEIN"/>
    <property type="match status" value="1"/>
</dbReference>
<dbReference type="PANTHER" id="PTHR14952:SF14">
    <property type="entry name" value="ROPPORIN-1-LIKE PROTEIN"/>
    <property type="match status" value="1"/>
</dbReference>
<dbReference type="SUPFAM" id="SSF47391">
    <property type="entry name" value="Dimerization-anchoring domain of cAMP-dependent PK regulatory subunit"/>
    <property type="match status" value="1"/>
</dbReference>
<accession>Q3T024</accession>
<gene>
    <name type="primary">ROPN1L</name>
</gene>
<organism>
    <name type="scientific">Bos taurus</name>
    <name type="common">Bovine</name>
    <dbReference type="NCBI Taxonomy" id="9913"/>
    <lineage>
        <taxon>Eukaryota</taxon>
        <taxon>Metazoa</taxon>
        <taxon>Chordata</taxon>
        <taxon>Craniata</taxon>
        <taxon>Vertebrata</taxon>
        <taxon>Euteleostomi</taxon>
        <taxon>Mammalia</taxon>
        <taxon>Eutheria</taxon>
        <taxon>Laurasiatheria</taxon>
        <taxon>Artiodactyla</taxon>
        <taxon>Ruminantia</taxon>
        <taxon>Pecora</taxon>
        <taxon>Bovidae</taxon>
        <taxon>Bovinae</taxon>
        <taxon>Bos</taxon>
    </lineage>
</organism>
<name>ROP1L_BOVIN</name>
<protein>
    <recommendedName>
        <fullName>Ropporin-1-like protein</fullName>
    </recommendedName>
</protein>
<sequence length="218" mass="24426">MPLPDTMFCAQQIHIPPELTDILKQFTKAAIRTQPADVLQWSAGYFSALSRGDPLPVKDRIEMPMATQKTDTGLTQGLLKVLHKQCSHKEYVDLADLEQKWKNLCLPVEKFRALLQLDPCEDKIEWIKFLALGCSMLGGSLNTAMKHLCEILTTDPEGGPARIPFGTFSYVYRYLSGLDSDIPESDTEAYLSSLKENAAARKNGMIGLSDFFVLKRKI</sequence>
<reference key="1">
    <citation type="submission" date="2005-08" db="EMBL/GenBank/DDBJ databases">
        <authorList>
            <consortium name="NIH - Mammalian Gene Collection (MGC) project"/>
        </authorList>
    </citation>
    <scope>NUCLEOTIDE SEQUENCE [LARGE SCALE MRNA]</scope>
    <source>
        <strain>Crossbred X Angus</strain>
        <tissue>Liver</tissue>
    </source>
</reference>
<evidence type="ECO:0000250" key="1">
    <source>
        <dbReference type="UniProtKB" id="Q96C74"/>
    </source>
</evidence>
<evidence type="ECO:0000250" key="2">
    <source>
        <dbReference type="UniProtKB" id="Q9EQ00"/>
    </source>
</evidence>
<evidence type="ECO:0000305" key="3"/>